<dbReference type="EC" id="5.6.2.4" evidence="1"/>
<dbReference type="EMBL" id="BA000022">
    <property type="protein sequence ID" value="BAA18494.1"/>
    <property type="molecule type" value="Genomic_DNA"/>
</dbReference>
<dbReference type="PIR" id="S76235">
    <property type="entry name" value="S76235"/>
</dbReference>
<dbReference type="SMR" id="P74397"/>
<dbReference type="FunCoup" id="P74397">
    <property type="interactions" value="386"/>
</dbReference>
<dbReference type="IntAct" id="P74397">
    <property type="interactions" value="5"/>
</dbReference>
<dbReference type="STRING" id="1148.gene:10499375"/>
<dbReference type="PaxDb" id="1148-1653581"/>
<dbReference type="EnsemblBacteria" id="BAA18494">
    <property type="protein sequence ID" value="BAA18494"/>
    <property type="gene ID" value="BAA18494"/>
</dbReference>
<dbReference type="KEGG" id="syn:sll0270"/>
<dbReference type="eggNOG" id="COG1198">
    <property type="taxonomic scope" value="Bacteria"/>
</dbReference>
<dbReference type="InParanoid" id="P74397"/>
<dbReference type="PhylomeDB" id="P74397"/>
<dbReference type="Proteomes" id="UP000001425">
    <property type="component" value="Chromosome"/>
</dbReference>
<dbReference type="GO" id="GO:1990077">
    <property type="term" value="C:primosome complex"/>
    <property type="evidence" value="ECO:0007669"/>
    <property type="project" value="UniProtKB-UniRule"/>
</dbReference>
<dbReference type="GO" id="GO:0043138">
    <property type="term" value="F:3'-5' DNA helicase activity"/>
    <property type="evidence" value="ECO:0000318"/>
    <property type="project" value="GO_Central"/>
</dbReference>
<dbReference type="GO" id="GO:0005524">
    <property type="term" value="F:ATP binding"/>
    <property type="evidence" value="ECO:0007669"/>
    <property type="project" value="UniProtKB-UniRule"/>
</dbReference>
<dbReference type="GO" id="GO:0016887">
    <property type="term" value="F:ATP hydrolysis activity"/>
    <property type="evidence" value="ECO:0007669"/>
    <property type="project" value="RHEA"/>
</dbReference>
<dbReference type="GO" id="GO:0003677">
    <property type="term" value="F:DNA binding"/>
    <property type="evidence" value="ECO:0007669"/>
    <property type="project" value="UniProtKB-UniRule"/>
</dbReference>
<dbReference type="GO" id="GO:0008270">
    <property type="term" value="F:zinc ion binding"/>
    <property type="evidence" value="ECO:0007669"/>
    <property type="project" value="UniProtKB-UniRule"/>
</dbReference>
<dbReference type="GO" id="GO:0006310">
    <property type="term" value="P:DNA recombination"/>
    <property type="evidence" value="ECO:0000318"/>
    <property type="project" value="GO_Central"/>
</dbReference>
<dbReference type="GO" id="GO:0006260">
    <property type="term" value="P:DNA replication"/>
    <property type="evidence" value="ECO:0000318"/>
    <property type="project" value="GO_Central"/>
</dbReference>
<dbReference type="GO" id="GO:0006270">
    <property type="term" value="P:DNA replication initiation"/>
    <property type="evidence" value="ECO:0000318"/>
    <property type="project" value="GO_Central"/>
</dbReference>
<dbReference type="GO" id="GO:0006269">
    <property type="term" value="P:DNA replication, synthesis of primer"/>
    <property type="evidence" value="ECO:0007669"/>
    <property type="project" value="UniProtKB-KW"/>
</dbReference>
<dbReference type="GO" id="GO:0006302">
    <property type="term" value="P:double-strand break repair"/>
    <property type="evidence" value="ECO:0000318"/>
    <property type="project" value="GO_Central"/>
</dbReference>
<dbReference type="CDD" id="cd17929">
    <property type="entry name" value="DEXHc_priA"/>
    <property type="match status" value="1"/>
</dbReference>
<dbReference type="CDD" id="cd18804">
    <property type="entry name" value="SF2_C_priA"/>
    <property type="match status" value="1"/>
</dbReference>
<dbReference type="FunFam" id="3.40.1440.60:FF:000001">
    <property type="entry name" value="Primosomal protein N"/>
    <property type="match status" value="1"/>
</dbReference>
<dbReference type="FunFam" id="3.40.50.300:FF:000489">
    <property type="entry name" value="Primosome assembly protein PriA"/>
    <property type="match status" value="1"/>
</dbReference>
<dbReference type="Gene3D" id="3.40.50.300">
    <property type="entry name" value="P-loop containing nucleotide triphosphate hydrolases"/>
    <property type="match status" value="2"/>
</dbReference>
<dbReference type="Gene3D" id="3.40.1440.60">
    <property type="entry name" value="PriA, 3(prime) DNA-binding domain"/>
    <property type="match status" value="1"/>
</dbReference>
<dbReference type="HAMAP" id="MF_00983">
    <property type="entry name" value="PriA"/>
    <property type="match status" value="1"/>
</dbReference>
<dbReference type="InterPro" id="IPR011545">
    <property type="entry name" value="DEAD/DEAH_box_helicase_dom"/>
</dbReference>
<dbReference type="InterPro" id="IPR014001">
    <property type="entry name" value="Helicase_ATP-bd"/>
</dbReference>
<dbReference type="InterPro" id="IPR001650">
    <property type="entry name" value="Helicase_C-like"/>
</dbReference>
<dbReference type="InterPro" id="IPR027417">
    <property type="entry name" value="P-loop_NTPase"/>
</dbReference>
<dbReference type="InterPro" id="IPR005259">
    <property type="entry name" value="PriA"/>
</dbReference>
<dbReference type="InterPro" id="IPR041222">
    <property type="entry name" value="PriA_3primeBD"/>
</dbReference>
<dbReference type="InterPro" id="IPR042115">
    <property type="entry name" value="PriA_3primeBD_sf"/>
</dbReference>
<dbReference type="InterPro" id="IPR041236">
    <property type="entry name" value="PriA_C"/>
</dbReference>
<dbReference type="InterPro" id="IPR040498">
    <property type="entry name" value="PriA_CRR"/>
</dbReference>
<dbReference type="InterPro" id="IPR050880">
    <property type="entry name" value="PriA_helicase"/>
</dbReference>
<dbReference type="NCBIfam" id="TIGR00595">
    <property type="entry name" value="priA"/>
    <property type="match status" value="1"/>
</dbReference>
<dbReference type="NCBIfam" id="NF004066">
    <property type="entry name" value="PRK05580.1-3"/>
    <property type="match status" value="1"/>
</dbReference>
<dbReference type="PANTHER" id="PTHR30580">
    <property type="entry name" value="PRIMOSOMAL PROTEIN N"/>
    <property type="match status" value="1"/>
</dbReference>
<dbReference type="PANTHER" id="PTHR30580:SF0">
    <property type="entry name" value="PRIMOSOMAL PROTEIN N"/>
    <property type="match status" value="1"/>
</dbReference>
<dbReference type="Pfam" id="PF00270">
    <property type="entry name" value="DEAD"/>
    <property type="match status" value="1"/>
</dbReference>
<dbReference type="Pfam" id="PF00271">
    <property type="entry name" value="Helicase_C"/>
    <property type="match status" value="1"/>
</dbReference>
<dbReference type="Pfam" id="PF17764">
    <property type="entry name" value="PriA_3primeBD"/>
    <property type="match status" value="1"/>
</dbReference>
<dbReference type="Pfam" id="PF18074">
    <property type="entry name" value="PriA_C"/>
    <property type="match status" value="1"/>
</dbReference>
<dbReference type="Pfam" id="PF18319">
    <property type="entry name" value="Zn_ribbon_PriA"/>
    <property type="match status" value="1"/>
</dbReference>
<dbReference type="SMART" id="SM00487">
    <property type="entry name" value="DEXDc"/>
    <property type="match status" value="1"/>
</dbReference>
<dbReference type="SMART" id="SM00490">
    <property type="entry name" value="HELICc"/>
    <property type="match status" value="1"/>
</dbReference>
<dbReference type="SUPFAM" id="SSF52540">
    <property type="entry name" value="P-loop containing nucleoside triphosphate hydrolases"/>
    <property type="match status" value="2"/>
</dbReference>
<dbReference type="PROSITE" id="PS51192">
    <property type="entry name" value="HELICASE_ATP_BIND_1"/>
    <property type="match status" value="1"/>
</dbReference>
<dbReference type="PROSITE" id="PS51194">
    <property type="entry name" value="HELICASE_CTER"/>
    <property type="match status" value="1"/>
</dbReference>
<gene>
    <name evidence="1" type="primary">priA</name>
    <name type="ordered locus">sll0270</name>
</gene>
<name>PRIA_SYNY3</name>
<sequence>MTVSPSALAELGFNYQEEDSVRPWAAVLVDLPQNEGVYTYAIPPGLTVQDGDIVAVPFGNQQLGGIVVGCLTKLPPDLPPEKIKPIQDVIVSGFFAPHYWRLLHWLAEYYCTELITVIRMALPPGLLQRSQRRIKLNGDRLPSDWPLFLSQPSHQGARQILTLLQSSKEGDYSYRYLRQKVPGLTKALRDLLKRQWVESYLEPPKAVQPQLPKMVTLLNFDPSFKLTELQARTLIVLKNQGGEMWLADLLKAVPCSASTIQSLAKKGLVAIAEREKLRLFQQPSINASQAPELTPAQKQACQTVLPLQGYHQVLLHGVTGSGKTEVYLQICGDRLGKGQSVLVLVPEIGLTPQLTDRFRARFGNKVAVYHSGLSSGEKYDTWRQTLLGHEQIVIGTRSAIFTPLPNLGLIILDEEHDSSFKQTQLTPNYHARTVAQRRAELEQCPLILGSATPSLESWHTVHRHQNDPQRHYLELPERVQSRPLPPVQIVDMRAELKQGNRSIFSRALQTALGELKAKQQQGILFINRRGHSTFVSCRSCGYVLECPNCDVSLSYHYVQGNGQPLLRCHYCNHAEIQPKVCPECSSPYLKFFGSGTQKVTEALTQEFPDLRWIRFDSDTTRRKGAHRALLDQFQRGEADLLVGTQMLTKGLDLAQITLVGVVAADSLLNFADYRSAERGFQTLTQVSGRAGRGEEPGQVIIQTYTPRHPVIQAVKTHNYHGFIAQELPQREMLNYPPYGKLILLRCLGTNEREVEKTIQAIAVLCEQLLPKTVEILGPAPASILRIAQRYRWQLLVKYPSFIKVILPLERIKQICPSSVYLDIDVDPLSID</sequence>
<reference key="1">
    <citation type="journal article" date="1996" name="DNA Res.">
        <title>Sequence analysis of the genome of the unicellular cyanobacterium Synechocystis sp. strain PCC6803. II. Sequence determination of the entire genome and assignment of potential protein-coding regions.</title>
        <authorList>
            <person name="Kaneko T."/>
            <person name="Sato S."/>
            <person name="Kotani H."/>
            <person name="Tanaka A."/>
            <person name="Asamizu E."/>
            <person name="Nakamura Y."/>
            <person name="Miyajima N."/>
            <person name="Hirosawa M."/>
            <person name="Sugiura M."/>
            <person name="Sasamoto S."/>
            <person name="Kimura T."/>
            <person name="Hosouchi T."/>
            <person name="Matsuno A."/>
            <person name="Muraki A."/>
            <person name="Nakazaki N."/>
            <person name="Naruo K."/>
            <person name="Okumura S."/>
            <person name="Shimpo S."/>
            <person name="Takeuchi C."/>
            <person name="Wada T."/>
            <person name="Watanabe A."/>
            <person name="Yamada M."/>
            <person name="Yasuda M."/>
            <person name="Tabata S."/>
        </authorList>
    </citation>
    <scope>NUCLEOTIDE SEQUENCE [LARGE SCALE GENOMIC DNA]</scope>
    <source>
        <strain>ATCC 27184 / PCC 6803 / Kazusa</strain>
    </source>
</reference>
<feature type="chain" id="PRO_0000102134" description="Replication restart protein PriA">
    <location>
        <begin position="1"/>
        <end position="831"/>
    </location>
</feature>
<feature type="domain" description="Helicase ATP-binding" evidence="1">
    <location>
        <begin position="304"/>
        <end position="471"/>
    </location>
</feature>
<feature type="domain" description="Helicase C-terminal" evidence="1">
    <location>
        <begin position="575"/>
        <end position="735"/>
    </location>
</feature>
<feature type="short sequence motif" description="DEAH box" evidence="1">
    <location>
        <begin position="413"/>
        <end position="416"/>
    </location>
</feature>
<feature type="binding site" evidence="1">
    <location>
        <begin position="317"/>
        <end position="324"/>
    </location>
    <ligand>
        <name>ATP</name>
        <dbReference type="ChEBI" id="CHEBI:30616"/>
    </ligand>
</feature>
<feature type="binding site" evidence="1">
    <location>
        <position position="537"/>
    </location>
    <ligand>
        <name>Zn(2+)</name>
        <dbReference type="ChEBI" id="CHEBI:29105"/>
        <label>1</label>
    </ligand>
</feature>
<feature type="binding site" evidence="1">
    <location>
        <position position="540"/>
    </location>
    <ligand>
        <name>Zn(2+)</name>
        <dbReference type="ChEBI" id="CHEBI:29105"/>
        <label>1</label>
    </ligand>
</feature>
<feature type="binding site" evidence="1">
    <location>
        <position position="546"/>
    </location>
    <ligand>
        <name>Zn(2+)</name>
        <dbReference type="ChEBI" id="CHEBI:29105"/>
        <label>2</label>
    </ligand>
</feature>
<feature type="binding site" evidence="1">
    <location>
        <position position="549"/>
    </location>
    <ligand>
        <name>Zn(2+)</name>
        <dbReference type="ChEBI" id="CHEBI:29105"/>
        <label>2</label>
    </ligand>
</feature>
<feature type="binding site" evidence="1">
    <location>
        <position position="568"/>
    </location>
    <ligand>
        <name>Zn(2+)</name>
        <dbReference type="ChEBI" id="CHEBI:29105"/>
        <label>2</label>
    </ligand>
</feature>
<feature type="binding site" evidence="1">
    <location>
        <position position="571"/>
    </location>
    <ligand>
        <name>Zn(2+)</name>
        <dbReference type="ChEBI" id="CHEBI:29105"/>
        <label>2</label>
    </ligand>
</feature>
<feature type="binding site" evidence="1">
    <location>
        <position position="581"/>
    </location>
    <ligand>
        <name>Zn(2+)</name>
        <dbReference type="ChEBI" id="CHEBI:29105"/>
        <label>1</label>
    </ligand>
</feature>
<feature type="binding site" evidence="1">
    <location>
        <position position="584"/>
    </location>
    <ligand>
        <name>Zn(2+)</name>
        <dbReference type="ChEBI" id="CHEBI:29105"/>
        <label>1</label>
    </ligand>
</feature>
<protein>
    <recommendedName>
        <fullName evidence="1">Replication restart protein PriA</fullName>
    </recommendedName>
    <alternativeName>
        <fullName evidence="1">ATP-dependent DNA helicase PriA</fullName>
        <ecNumber evidence="1">5.6.2.4</ecNumber>
    </alternativeName>
    <alternativeName>
        <fullName evidence="1">DNA 3'-5' helicase PriA</fullName>
    </alternativeName>
</protein>
<accession>P74397</accession>
<evidence type="ECO:0000255" key="1">
    <source>
        <dbReference type="HAMAP-Rule" id="MF_00983"/>
    </source>
</evidence>
<organism>
    <name type="scientific">Synechocystis sp. (strain ATCC 27184 / PCC 6803 / Kazusa)</name>
    <dbReference type="NCBI Taxonomy" id="1111708"/>
    <lineage>
        <taxon>Bacteria</taxon>
        <taxon>Bacillati</taxon>
        <taxon>Cyanobacteriota</taxon>
        <taxon>Cyanophyceae</taxon>
        <taxon>Synechococcales</taxon>
        <taxon>Merismopediaceae</taxon>
        <taxon>Synechocystis</taxon>
    </lineage>
</organism>
<proteinExistence type="inferred from homology"/>
<keyword id="KW-0067">ATP-binding</keyword>
<keyword id="KW-0235">DNA replication</keyword>
<keyword id="KW-0238">DNA-binding</keyword>
<keyword id="KW-0347">Helicase</keyword>
<keyword id="KW-0378">Hydrolase</keyword>
<keyword id="KW-0413">Isomerase</keyword>
<keyword id="KW-0479">Metal-binding</keyword>
<keyword id="KW-0547">Nucleotide-binding</keyword>
<keyword id="KW-0639">Primosome</keyword>
<keyword id="KW-1185">Reference proteome</keyword>
<keyword id="KW-0862">Zinc</keyword>
<comment type="function">
    <text evidence="1">Initiates the restart of stalled replication forks, which reloads the replicative helicase on sites other than the origin of replication. Recognizes and binds to abandoned replication forks and remodels them to uncover a helicase loading site. Promotes assembly of the primosome at these replication forks.</text>
</comment>
<comment type="catalytic activity">
    <reaction evidence="1">
        <text>Couples ATP hydrolysis with the unwinding of duplex DNA by translocating in the 3'-5' direction.</text>
        <dbReference type="EC" id="5.6.2.4"/>
    </reaction>
</comment>
<comment type="catalytic activity">
    <reaction evidence="1">
        <text>ATP + H2O = ADP + phosphate + H(+)</text>
        <dbReference type="Rhea" id="RHEA:13065"/>
        <dbReference type="ChEBI" id="CHEBI:15377"/>
        <dbReference type="ChEBI" id="CHEBI:15378"/>
        <dbReference type="ChEBI" id="CHEBI:30616"/>
        <dbReference type="ChEBI" id="CHEBI:43474"/>
        <dbReference type="ChEBI" id="CHEBI:456216"/>
        <dbReference type="EC" id="5.6.2.4"/>
    </reaction>
</comment>
<comment type="cofactor">
    <cofactor evidence="1">
        <name>Zn(2+)</name>
        <dbReference type="ChEBI" id="CHEBI:29105"/>
    </cofactor>
    <text evidence="1">Binds 2 zinc ions per subunit.</text>
</comment>
<comment type="subunit">
    <text evidence="1">Component of the replication restart primosome.</text>
</comment>
<comment type="similarity">
    <text evidence="1">Belongs to the helicase family. PriA subfamily.</text>
</comment>